<gene>
    <name evidence="1" type="primary">aceK</name>
    <name type="ordered locus">SeAg_B4432</name>
</gene>
<name>ACEK_SALA4</name>
<proteinExistence type="inferred from homology"/>
<protein>
    <recommendedName>
        <fullName evidence="1">Isocitrate dehydrogenase kinase/phosphatase</fullName>
        <shortName evidence="1">IDH kinase/phosphatase</shortName>
        <shortName evidence="1">IDHK/P</shortName>
        <ecNumber evidence="1">2.7.11.5</ecNumber>
        <ecNumber evidence="1">3.1.3.-</ecNumber>
    </recommendedName>
</protein>
<organism>
    <name type="scientific">Salmonella agona (strain SL483)</name>
    <dbReference type="NCBI Taxonomy" id="454166"/>
    <lineage>
        <taxon>Bacteria</taxon>
        <taxon>Pseudomonadati</taxon>
        <taxon>Pseudomonadota</taxon>
        <taxon>Gammaproteobacteria</taxon>
        <taxon>Enterobacterales</taxon>
        <taxon>Enterobacteriaceae</taxon>
        <taxon>Salmonella</taxon>
    </lineage>
</organism>
<feature type="chain" id="PRO_1000133277" description="Isocitrate dehydrogenase kinase/phosphatase">
    <location>
        <begin position="1"/>
        <end position="583"/>
    </location>
</feature>
<feature type="active site" evidence="1">
    <location>
        <position position="371"/>
    </location>
</feature>
<feature type="binding site" evidence="1">
    <location>
        <begin position="315"/>
        <end position="321"/>
    </location>
    <ligand>
        <name>ATP</name>
        <dbReference type="ChEBI" id="CHEBI:30616"/>
    </ligand>
</feature>
<feature type="binding site" evidence="1">
    <location>
        <position position="336"/>
    </location>
    <ligand>
        <name>ATP</name>
        <dbReference type="ChEBI" id="CHEBI:30616"/>
    </ligand>
</feature>
<accession>B5F1J4</accession>
<dbReference type="EC" id="2.7.11.5" evidence="1"/>
<dbReference type="EC" id="3.1.3.-" evidence="1"/>
<dbReference type="EMBL" id="CP001138">
    <property type="protein sequence ID" value="ACH51227.1"/>
    <property type="molecule type" value="Genomic_DNA"/>
</dbReference>
<dbReference type="RefSeq" id="WP_001137266.1">
    <property type="nucleotide sequence ID" value="NC_011149.1"/>
</dbReference>
<dbReference type="SMR" id="B5F1J4"/>
<dbReference type="KEGG" id="sea:SeAg_B4432"/>
<dbReference type="HOGENOM" id="CLU_033804_1_1_6"/>
<dbReference type="Proteomes" id="UP000008819">
    <property type="component" value="Chromosome"/>
</dbReference>
<dbReference type="GO" id="GO:0005737">
    <property type="term" value="C:cytoplasm"/>
    <property type="evidence" value="ECO:0007669"/>
    <property type="project" value="UniProtKB-SubCell"/>
</dbReference>
<dbReference type="GO" id="GO:0008772">
    <property type="term" value="F:[isocitrate dehydrogenase (NADP+)] kinase activity"/>
    <property type="evidence" value="ECO:0007669"/>
    <property type="project" value="UniProtKB-UniRule"/>
</dbReference>
<dbReference type="GO" id="GO:0016208">
    <property type="term" value="F:AMP binding"/>
    <property type="evidence" value="ECO:0007669"/>
    <property type="project" value="TreeGrafter"/>
</dbReference>
<dbReference type="GO" id="GO:0005524">
    <property type="term" value="F:ATP binding"/>
    <property type="evidence" value="ECO:0007669"/>
    <property type="project" value="UniProtKB-UniRule"/>
</dbReference>
<dbReference type="GO" id="GO:0004721">
    <property type="term" value="F:phosphoprotein phosphatase activity"/>
    <property type="evidence" value="ECO:0007669"/>
    <property type="project" value="UniProtKB-KW"/>
</dbReference>
<dbReference type="GO" id="GO:0004674">
    <property type="term" value="F:protein serine/threonine kinase activity"/>
    <property type="evidence" value="ECO:0007669"/>
    <property type="project" value="UniProtKB-KW"/>
</dbReference>
<dbReference type="GO" id="GO:0006006">
    <property type="term" value="P:glucose metabolic process"/>
    <property type="evidence" value="ECO:0007669"/>
    <property type="project" value="InterPro"/>
</dbReference>
<dbReference type="GO" id="GO:0006097">
    <property type="term" value="P:glyoxylate cycle"/>
    <property type="evidence" value="ECO:0007669"/>
    <property type="project" value="UniProtKB-UniRule"/>
</dbReference>
<dbReference type="GO" id="GO:0006099">
    <property type="term" value="P:tricarboxylic acid cycle"/>
    <property type="evidence" value="ECO:0007669"/>
    <property type="project" value="UniProtKB-UniRule"/>
</dbReference>
<dbReference type="HAMAP" id="MF_00747">
    <property type="entry name" value="AceK"/>
    <property type="match status" value="1"/>
</dbReference>
<dbReference type="InterPro" id="IPR046855">
    <property type="entry name" value="AceK_kinase"/>
</dbReference>
<dbReference type="InterPro" id="IPR046854">
    <property type="entry name" value="AceK_regulatory"/>
</dbReference>
<dbReference type="InterPro" id="IPR010452">
    <property type="entry name" value="Isocitrate_DH_AceK"/>
</dbReference>
<dbReference type="NCBIfam" id="NF002804">
    <property type="entry name" value="PRK02946.1"/>
    <property type="match status" value="1"/>
</dbReference>
<dbReference type="PANTHER" id="PTHR39559">
    <property type="match status" value="1"/>
</dbReference>
<dbReference type="PANTHER" id="PTHR39559:SF1">
    <property type="entry name" value="ISOCITRATE DEHYDROGENASE KINASE_PHOSPHATASE"/>
    <property type="match status" value="1"/>
</dbReference>
<dbReference type="Pfam" id="PF06315">
    <property type="entry name" value="AceK_kinase"/>
    <property type="match status" value="1"/>
</dbReference>
<dbReference type="Pfam" id="PF20423">
    <property type="entry name" value="AceK_regulatory"/>
    <property type="match status" value="1"/>
</dbReference>
<dbReference type="PIRSF" id="PIRSF000719">
    <property type="entry name" value="AceK"/>
    <property type="match status" value="1"/>
</dbReference>
<comment type="function">
    <text evidence="1">Bifunctional enzyme which can phosphorylate or dephosphorylate isocitrate dehydrogenase (IDH) on a specific serine residue. This is a regulatory mechanism which enables bacteria to bypass the Krebs cycle via the glyoxylate shunt in response to the source of carbon. When bacteria are grown on glucose, IDH is fully active and unphosphorylated, but when grown on acetate or ethanol, the activity of IDH declines drastically concomitant with its phosphorylation.</text>
</comment>
<comment type="catalytic activity">
    <reaction evidence="1">
        <text>L-seryl-[isocitrate dehydrogenase] + ATP = O-phospho-L-seryl-[isocitrate dehydrogenase] + ADP + H(+)</text>
        <dbReference type="Rhea" id="RHEA:43540"/>
        <dbReference type="Rhea" id="RHEA-COMP:10605"/>
        <dbReference type="Rhea" id="RHEA-COMP:10606"/>
        <dbReference type="ChEBI" id="CHEBI:15378"/>
        <dbReference type="ChEBI" id="CHEBI:29999"/>
        <dbReference type="ChEBI" id="CHEBI:30616"/>
        <dbReference type="ChEBI" id="CHEBI:83421"/>
        <dbReference type="ChEBI" id="CHEBI:456216"/>
        <dbReference type="EC" id="2.7.11.5"/>
    </reaction>
</comment>
<comment type="subcellular location">
    <subcellularLocation>
        <location evidence="1">Cytoplasm</location>
    </subcellularLocation>
</comment>
<comment type="similarity">
    <text evidence="1">Belongs to the AceK family.</text>
</comment>
<keyword id="KW-0067">ATP-binding</keyword>
<keyword id="KW-0963">Cytoplasm</keyword>
<keyword id="KW-0329">Glyoxylate bypass</keyword>
<keyword id="KW-0378">Hydrolase</keyword>
<keyword id="KW-0418">Kinase</keyword>
<keyword id="KW-0547">Nucleotide-binding</keyword>
<keyword id="KW-0904">Protein phosphatase</keyword>
<keyword id="KW-0723">Serine/threonine-protein kinase</keyword>
<keyword id="KW-0808">Transferase</keyword>
<keyword id="KW-0816">Tricarboxylic acid cycle</keyword>
<sequence length="583" mass="67956">MPRGLELLIAQTILQGFDAQYGRFLEVTSGAQQRFEQADWHAVQQAMKSRIHLYDHHVGLVVEQLRCITDGKSTDADFLLRVKEHYTRLLPDYPRFEIAESFFNSVYCRLFDHRSLTPERLFIFSSQPERRFRTIPRPLAKDFFPDHGWEPLLMRILSDLPLRLPWQNKSRDIRYIIAHLTETLGEDALPRCHVQVANELFYRNKAAWLVGKLTTPDGTLPFLLPIHRTDEGELFVDTCLTTTAEASIVFGFARSYFMVYAPLPAALVEWLREILPGKTTAELYMAIGCQKHAKTESYREYLCYLAESDEKFIEAPGIRGMVMLVFTLPGFDRVFKIIKDKFAPQKEMSAAHVRACYQLVKEHDRVGRMADTQEFENFVLDKRQIDPALMALLRQEAPEKITDLGEHIVIRHLYIERRMVPLNIWLEQVEGQQLRDAIEEYGNAIRQLAAANIFPGDMLFKNFGVTRHGRVVFYDYDEICYMTEVNFRDIPPARYPEDELASEPWYSVSPGDVFPEEFRHWLCADPRIGPLFEEMHADLFRADYWRALQTRIKEGHVEDVYAYRRRQRFSVRYGAISSTANSS</sequence>
<evidence type="ECO:0000255" key="1">
    <source>
        <dbReference type="HAMAP-Rule" id="MF_00747"/>
    </source>
</evidence>
<reference key="1">
    <citation type="journal article" date="2011" name="J. Bacteriol.">
        <title>Comparative genomics of 28 Salmonella enterica isolates: evidence for CRISPR-mediated adaptive sublineage evolution.</title>
        <authorList>
            <person name="Fricke W.F."/>
            <person name="Mammel M.K."/>
            <person name="McDermott P.F."/>
            <person name="Tartera C."/>
            <person name="White D.G."/>
            <person name="Leclerc J.E."/>
            <person name="Ravel J."/>
            <person name="Cebula T.A."/>
        </authorList>
    </citation>
    <scope>NUCLEOTIDE SEQUENCE [LARGE SCALE GENOMIC DNA]</scope>
    <source>
        <strain>SL483</strain>
    </source>
</reference>